<gene>
    <name type="primary">KRR1</name>
</gene>
<comment type="function">
    <text evidence="1">Part of the small subunit (SSU) processome, first precursor of the small eukaryotic ribosomal subunit. During the assembly of the SSU processome in the nucleolus, many ribosome biogenesis factors, an RNA chaperone and ribosomal proteins associate with the nascent pre-rRNA and work in concert to generate RNA folding, modifications, rearrangements and cleavage as well as targeted degradation of pre-ribosomal RNA by the RNA exosome.</text>
</comment>
<comment type="subunit">
    <text evidence="1">Part of the small subunit (SSU) processome, composed of more than 70 proteins and the RNA chaperone small nucleolar RNA (snoRNA) U3.</text>
</comment>
<comment type="subcellular location">
    <subcellularLocation>
        <location evidence="1">Nucleus</location>
        <location evidence="1">Nucleolus</location>
    </subcellularLocation>
</comment>
<comment type="similarity">
    <text evidence="3">Belongs to the KRR1 family.</text>
</comment>
<keyword id="KW-0007">Acetylation</keyword>
<keyword id="KW-1017">Isopeptide bond</keyword>
<keyword id="KW-0539">Nucleus</keyword>
<keyword id="KW-0597">Phosphoprotein</keyword>
<keyword id="KW-1185">Reference proteome</keyword>
<keyword id="KW-0687">Ribonucleoprotein</keyword>
<keyword id="KW-0690">Ribosome biogenesis</keyword>
<keyword id="KW-0694">RNA-binding</keyword>
<keyword id="KW-0698">rRNA processing</keyword>
<keyword id="KW-0832">Ubl conjugation</keyword>
<name>KRR1_BOVIN</name>
<accession>Q3B7L9</accession>
<accession>F1N7H6</accession>
<protein>
    <recommendedName>
        <fullName>KRR1 small subunit processome component homolog</fullName>
    </recommendedName>
    <alternativeName>
        <fullName>KRR-R motif-containing protein 1</fullName>
    </alternativeName>
</protein>
<sequence>MASSKQNGPTTASGKSELRSPKPTSENRDESELLTVPDGWKEPAFSKEDNPRGLLEESSFATLFPKYREAYLKECWPLVQKALNEHHINATLDLIEGSMTVCTTKKTFDPYIIIRARDLIKLLARSVSFEQAIRILQDDVACDIIKIGSLVRNKERFVKRRQRLIGPKGSTLKALELLTNCYIMVQGNTVSAIGPFSGLKEVRKVVLDTMKNIHPIYNIKTLMIKRELAKDSELRSQSWERFLPQFKHKNVNKRKEPKKKTVKKEYTPFPPPQPESQIDKELASGEYFLKASQKKRQKMEAIKAKQAEALSKRQEERNKAFIPPKEKPVHLKKPKEASTETKIDVAALKEKVKKAKNKKLGALTAEEVKLKMEADEKKKKKK</sequence>
<organism>
    <name type="scientific">Bos taurus</name>
    <name type="common">Bovine</name>
    <dbReference type="NCBI Taxonomy" id="9913"/>
    <lineage>
        <taxon>Eukaryota</taxon>
        <taxon>Metazoa</taxon>
        <taxon>Chordata</taxon>
        <taxon>Craniata</taxon>
        <taxon>Vertebrata</taxon>
        <taxon>Euteleostomi</taxon>
        <taxon>Mammalia</taxon>
        <taxon>Eutheria</taxon>
        <taxon>Laurasiatheria</taxon>
        <taxon>Artiodactyla</taxon>
        <taxon>Ruminantia</taxon>
        <taxon>Pecora</taxon>
        <taxon>Bovidae</taxon>
        <taxon>Bovinae</taxon>
        <taxon>Bos</taxon>
    </lineage>
</organism>
<proteinExistence type="evidence at transcript level"/>
<reference key="1">
    <citation type="journal article" date="2009" name="Genome Biol.">
        <title>A whole-genome assembly of the domestic cow, Bos taurus.</title>
        <authorList>
            <person name="Zimin A.V."/>
            <person name="Delcher A.L."/>
            <person name="Florea L."/>
            <person name="Kelley D.R."/>
            <person name="Schatz M.C."/>
            <person name="Puiu D."/>
            <person name="Hanrahan F."/>
            <person name="Pertea G."/>
            <person name="Van Tassell C.P."/>
            <person name="Sonstegard T.S."/>
            <person name="Marcais G."/>
            <person name="Roberts M."/>
            <person name="Subramanian P."/>
            <person name="Yorke J.A."/>
            <person name="Salzberg S.L."/>
        </authorList>
    </citation>
    <scope>NUCLEOTIDE SEQUENCE [LARGE SCALE GENOMIC DNA]</scope>
    <source>
        <strain>Hereford</strain>
    </source>
</reference>
<reference key="2">
    <citation type="submission" date="2005-10" db="EMBL/GenBank/DDBJ databases">
        <authorList>
            <consortium name="NIH - Mammalian Gene Collection (MGC) project"/>
        </authorList>
    </citation>
    <scope>NUCLEOTIDE SEQUENCE [LARGE SCALE MRNA]</scope>
    <source>
        <strain>Hereford</strain>
        <tissue>Thymus</tissue>
    </source>
</reference>
<feature type="initiator methionine" description="Removed" evidence="1">
    <location>
        <position position="1"/>
    </location>
</feature>
<feature type="chain" id="PRO_0000342400" description="KRR1 small subunit processome component homolog">
    <location>
        <begin position="2"/>
        <end position="382"/>
    </location>
</feature>
<feature type="domain" description="KH">
    <location>
        <begin position="154"/>
        <end position="206"/>
    </location>
</feature>
<feature type="region of interest" description="Disordered" evidence="2">
    <location>
        <begin position="1"/>
        <end position="51"/>
    </location>
</feature>
<feature type="region of interest" description="Disordered" evidence="2">
    <location>
        <begin position="250"/>
        <end position="278"/>
    </location>
</feature>
<feature type="region of interest" description="Disordered" evidence="2">
    <location>
        <begin position="307"/>
        <end position="338"/>
    </location>
</feature>
<feature type="compositionally biased region" description="Polar residues" evidence="2">
    <location>
        <begin position="1"/>
        <end position="14"/>
    </location>
</feature>
<feature type="compositionally biased region" description="Basic and acidic residues" evidence="2">
    <location>
        <begin position="16"/>
        <end position="31"/>
    </location>
</feature>
<feature type="compositionally biased region" description="Basic and acidic residues" evidence="2">
    <location>
        <begin position="39"/>
        <end position="51"/>
    </location>
</feature>
<feature type="compositionally biased region" description="Basic residues" evidence="2">
    <location>
        <begin position="250"/>
        <end position="262"/>
    </location>
</feature>
<feature type="modified residue" description="N-acetylalanine" evidence="1">
    <location>
        <position position="2"/>
    </location>
</feature>
<feature type="modified residue" description="Phosphoserine" evidence="1">
    <location>
        <position position="3"/>
    </location>
</feature>
<feature type="cross-link" description="Glycyl lysine isopeptide (Lys-Gly) (interchain with G-Cter in SUMO2)" evidence="1">
    <location>
        <position position="342"/>
    </location>
</feature>
<feature type="cross-link" description="Glycyl lysine isopeptide (Lys-Gly) (interchain with G-Cter in SUMO2)" evidence="1">
    <location>
        <position position="371"/>
    </location>
</feature>
<feature type="sequence conflict" description="In Ref. 2; AAI07551." evidence="3" ref="2">
    <original>G</original>
    <variation>V</variation>
    <location>
        <position position="198"/>
    </location>
</feature>
<dbReference type="EMBL" id="DAAA02012357">
    <property type="status" value="NOT_ANNOTATED_CDS"/>
    <property type="molecule type" value="Genomic_DNA"/>
</dbReference>
<dbReference type="EMBL" id="BC107550">
    <property type="protein sequence ID" value="AAI07551.1"/>
    <property type="molecule type" value="mRNA"/>
</dbReference>
<dbReference type="RefSeq" id="NP_001032908.1">
    <property type="nucleotide sequence ID" value="NM_001037819.1"/>
</dbReference>
<dbReference type="SMR" id="Q3B7L9"/>
<dbReference type="FunCoup" id="Q3B7L9">
    <property type="interactions" value="3310"/>
</dbReference>
<dbReference type="STRING" id="9913.ENSBTAP00000015401"/>
<dbReference type="PaxDb" id="9913-ENSBTAP00000015401"/>
<dbReference type="Ensembl" id="ENSBTAT00000015401.4">
    <property type="protein sequence ID" value="ENSBTAP00000015401.3"/>
    <property type="gene ID" value="ENSBTAG00000011591.5"/>
</dbReference>
<dbReference type="GeneID" id="513714"/>
<dbReference type="KEGG" id="bta:513714"/>
<dbReference type="CTD" id="11103"/>
<dbReference type="VEuPathDB" id="HostDB:ENSBTAG00000011591"/>
<dbReference type="VGNC" id="VGNC:30715">
    <property type="gene designation" value="KRR1"/>
</dbReference>
<dbReference type="eggNOG" id="KOG2874">
    <property type="taxonomic scope" value="Eukaryota"/>
</dbReference>
<dbReference type="GeneTree" id="ENSGT00390000018775"/>
<dbReference type="HOGENOM" id="CLU_040185_0_0_1"/>
<dbReference type="InParanoid" id="Q3B7L9"/>
<dbReference type="OMA" id="TPDIDKW"/>
<dbReference type="OrthoDB" id="441223at2759"/>
<dbReference type="TreeFam" id="TF105745"/>
<dbReference type="Reactome" id="R-BTA-6791226">
    <property type="pathway name" value="Major pathway of rRNA processing in the nucleolus and cytosol"/>
</dbReference>
<dbReference type="CD-CODE" id="D7FE2080">
    <property type="entry name" value="Nucleolus"/>
</dbReference>
<dbReference type="Proteomes" id="UP000009136">
    <property type="component" value="Chromosome 5"/>
</dbReference>
<dbReference type="Bgee" id="ENSBTAG00000011591">
    <property type="expression patterns" value="Expressed in neutrophil and 106 other cell types or tissues"/>
</dbReference>
<dbReference type="GO" id="GO:0005730">
    <property type="term" value="C:nucleolus"/>
    <property type="evidence" value="ECO:0000318"/>
    <property type="project" value="GO_Central"/>
</dbReference>
<dbReference type="GO" id="GO:0032040">
    <property type="term" value="C:small-subunit processome"/>
    <property type="evidence" value="ECO:0000250"/>
    <property type="project" value="UniProtKB"/>
</dbReference>
<dbReference type="GO" id="GO:0003723">
    <property type="term" value="F:RNA binding"/>
    <property type="evidence" value="ECO:0007669"/>
    <property type="project" value="UniProtKB-KW"/>
</dbReference>
<dbReference type="GO" id="GO:0042274">
    <property type="term" value="P:ribosomal small subunit biogenesis"/>
    <property type="evidence" value="ECO:0000250"/>
    <property type="project" value="UniProtKB"/>
</dbReference>
<dbReference type="GO" id="GO:0006364">
    <property type="term" value="P:rRNA processing"/>
    <property type="evidence" value="ECO:0007669"/>
    <property type="project" value="UniProtKB-KW"/>
</dbReference>
<dbReference type="CDD" id="cd22393">
    <property type="entry name" value="KH-I_KRR1_rpt1"/>
    <property type="match status" value="1"/>
</dbReference>
<dbReference type="CDD" id="cd22394">
    <property type="entry name" value="KH-I_KRR1_rpt2"/>
    <property type="match status" value="1"/>
</dbReference>
<dbReference type="FunFam" id="3.30.1370.10:FF:000011">
    <property type="entry name" value="KRR1 small subunit processome component"/>
    <property type="match status" value="1"/>
</dbReference>
<dbReference type="FunFam" id="3.30.1370.10:FF:000014">
    <property type="entry name" value="KRR1 small subunit processome component"/>
    <property type="match status" value="1"/>
</dbReference>
<dbReference type="Gene3D" id="3.30.1370.10">
    <property type="entry name" value="K Homology domain, type 1"/>
    <property type="match status" value="2"/>
</dbReference>
<dbReference type="InterPro" id="IPR004087">
    <property type="entry name" value="KH_dom"/>
</dbReference>
<dbReference type="InterPro" id="IPR036612">
    <property type="entry name" value="KH_dom_type_1_sf"/>
</dbReference>
<dbReference type="InterPro" id="IPR041174">
    <property type="entry name" value="KRR1-like_KH1"/>
</dbReference>
<dbReference type="InterPro" id="IPR048550">
    <property type="entry name" value="KRR1-like_KH1_euk"/>
</dbReference>
<dbReference type="InterPro" id="IPR048548">
    <property type="entry name" value="KRR1-like_KH2"/>
</dbReference>
<dbReference type="InterPro" id="IPR048549">
    <property type="entry name" value="KRR1-like_KH2_euk"/>
</dbReference>
<dbReference type="InterPro" id="IPR024166">
    <property type="entry name" value="rRNA_assembly_KRR1"/>
</dbReference>
<dbReference type="PANTHER" id="PTHR12581">
    <property type="entry name" value="HIV-1 REV BINDING PROTEIN 2, 3"/>
    <property type="match status" value="1"/>
</dbReference>
<dbReference type="PANTHER" id="PTHR12581:SF0">
    <property type="entry name" value="KRR1 SMALL SUBUNIT PROCESSOME COMPONENT HOMOLOG"/>
    <property type="match status" value="1"/>
</dbReference>
<dbReference type="Pfam" id="PF17903">
    <property type="entry name" value="KH_KRR1_1st"/>
    <property type="match status" value="1"/>
</dbReference>
<dbReference type="Pfam" id="PF21800">
    <property type="entry name" value="KH_KRR1_2nd"/>
    <property type="match status" value="1"/>
</dbReference>
<dbReference type="PIRSF" id="PIRSF006515">
    <property type="entry name" value="KRR1"/>
    <property type="match status" value="1"/>
</dbReference>
<dbReference type="SMART" id="SM00322">
    <property type="entry name" value="KH"/>
    <property type="match status" value="1"/>
</dbReference>
<dbReference type="SUPFAM" id="SSF54791">
    <property type="entry name" value="Eukaryotic type KH-domain (KH-domain type I)"/>
    <property type="match status" value="1"/>
</dbReference>
<evidence type="ECO:0000250" key="1">
    <source>
        <dbReference type="UniProtKB" id="Q13601"/>
    </source>
</evidence>
<evidence type="ECO:0000256" key="2">
    <source>
        <dbReference type="SAM" id="MobiDB-lite"/>
    </source>
</evidence>
<evidence type="ECO:0000305" key="3"/>